<comment type="function">
    <text evidence="1">RNA-binding component of the cleavage and polyadenylation factor (CPF) complex, which plays a key role in polyadenylation-dependent pre-mRNA 3'-end formation and cooperates with cleavage factors including the CFIA complex and NAB4/CFIB. Involved in poly(A) site recognition. May be involved in coupling transcription termination and mRNA 3'-end formation (By similarity).</text>
</comment>
<comment type="subcellular location">
    <subcellularLocation>
        <location evidence="1">Nucleus</location>
    </subcellularLocation>
</comment>
<comment type="similarity">
    <text evidence="3">Belongs to the CFT1 family.</text>
</comment>
<dbReference type="EMBL" id="AE016814">
    <property type="protein sequence ID" value="AAS50306.1"/>
    <property type="molecule type" value="Genomic_DNA"/>
</dbReference>
<dbReference type="RefSeq" id="NP_982482.1">
    <property type="nucleotide sequence ID" value="NM_207835.2"/>
</dbReference>
<dbReference type="SMR" id="Q75EY8"/>
<dbReference type="FunCoup" id="Q75EY8">
    <property type="interactions" value="1199"/>
</dbReference>
<dbReference type="STRING" id="284811.Q75EY8"/>
<dbReference type="EnsemblFungi" id="AAS50306">
    <property type="protein sequence ID" value="AAS50306"/>
    <property type="gene ID" value="AGOS_AAL060W"/>
</dbReference>
<dbReference type="GeneID" id="4618423"/>
<dbReference type="KEGG" id="ago:AGOS_AAL060W"/>
<dbReference type="eggNOG" id="KOG1896">
    <property type="taxonomic scope" value="Eukaryota"/>
</dbReference>
<dbReference type="HOGENOM" id="CLU_002414_0_0_1"/>
<dbReference type="InParanoid" id="Q75EY8"/>
<dbReference type="OMA" id="PMTKFKL"/>
<dbReference type="OrthoDB" id="6109at2759"/>
<dbReference type="Proteomes" id="UP000000591">
    <property type="component" value="Chromosome I"/>
</dbReference>
<dbReference type="GO" id="GO:0005847">
    <property type="term" value="C:mRNA cleavage and polyadenylation specificity factor complex"/>
    <property type="evidence" value="ECO:0000318"/>
    <property type="project" value="GO_Central"/>
</dbReference>
<dbReference type="GO" id="GO:0005634">
    <property type="term" value="C:nucleus"/>
    <property type="evidence" value="ECO:0000318"/>
    <property type="project" value="GO_Central"/>
</dbReference>
<dbReference type="GO" id="GO:0003723">
    <property type="term" value="F:RNA binding"/>
    <property type="evidence" value="ECO:0007669"/>
    <property type="project" value="UniProtKB-KW"/>
</dbReference>
<dbReference type="GO" id="GO:0006397">
    <property type="term" value="P:mRNA processing"/>
    <property type="evidence" value="ECO:0007669"/>
    <property type="project" value="UniProtKB-KW"/>
</dbReference>
<dbReference type="GO" id="GO:0006369">
    <property type="term" value="P:termination of RNA polymerase II transcription"/>
    <property type="evidence" value="ECO:0007669"/>
    <property type="project" value="EnsemblFungi"/>
</dbReference>
<dbReference type="FunFam" id="2.130.10.10:FF:000876">
    <property type="entry name" value="Cft1p"/>
    <property type="match status" value="1"/>
</dbReference>
<dbReference type="FunFam" id="2.130.10.10:FF:000937">
    <property type="entry name" value="Cft1p"/>
    <property type="match status" value="1"/>
</dbReference>
<dbReference type="Gene3D" id="2.130.10.10">
    <property type="entry name" value="YVTN repeat-like/Quinoprotein amine dehydrogenase"/>
    <property type="match status" value="3"/>
</dbReference>
<dbReference type="InterPro" id="IPR018846">
    <property type="entry name" value="Beta-prop_RSE1/DDB1/CPSF1_1st"/>
</dbReference>
<dbReference type="InterPro" id="IPR004871">
    <property type="entry name" value="Cleavage/polyA-sp_fac_asu_C"/>
</dbReference>
<dbReference type="InterPro" id="IPR050358">
    <property type="entry name" value="RSE1/DDB1/CFT1/CPSF1"/>
</dbReference>
<dbReference type="InterPro" id="IPR015943">
    <property type="entry name" value="WD40/YVTN_repeat-like_dom_sf"/>
</dbReference>
<dbReference type="InterPro" id="IPR036322">
    <property type="entry name" value="WD40_repeat_dom_sf"/>
</dbReference>
<dbReference type="PANTHER" id="PTHR10644">
    <property type="entry name" value="DNA REPAIR/RNA PROCESSING CPSF FAMILY"/>
    <property type="match status" value="1"/>
</dbReference>
<dbReference type="Pfam" id="PF10433">
    <property type="entry name" value="Beta-prop_RSE1_1st"/>
    <property type="match status" value="1"/>
</dbReference>
<dbReference type="Pfam" id="PF23726">
    <property type="entry name" value="Beta-prop_RSE1_2nd"/>
    <property type="match status" value="1"/>
</dbReference>
<dbReference type="Pfam" id="PF03178">
    <property type="entry name" value="CPSF_A"/>
    <property type="match status" value="1"/>
</dbReference>
<dbReference type="SUPFAM" id="SSF50978">
    <property type="entry name" value="WD40 repeat-like"/>
    <property type="match status" value="1"/>
</dbReference>
<accession>Q75EY8</accession>
<keyword id="KW-0507">mRNA processing</keyword>
<keyword id="KW-0539">Nucleus</keyword>
<keyword id="KW-1185">Reference proteome</keyword>
<keyword id="KW-0694">RNA-binding</keyword>
<reference key="1">
    <citation type="journal article" date="2004" name="Science">
        <title>The Ashbya gossypii genome as a tool for mapping the ancient Saccharomyces cerevisiae genome.</title>
        <authorList>
            <person name="Dietrich F.S."/>
            <person name="Voegeli S."/>
            <person name="Brachat S."/>
            <person name="Lerch A."/>
            <person name="Gates K."/>
            <person name="Steiner S."/>
            <person name="Mohr C."/>
            <person name="Poehlmann R."/>
            <person name="Luedi P."/>
            <person name="Choi S."/>
            <person name="Wing R.A."/>
            <person name="Flavier A."/>
            <person name="Gaffney T.D."/>
            <person name="Philippsen P."/>
        </authorList>
    </citation>
    <scope>NUCLEOTIDE SEQUENCE [LARGE SCALE GENOMIC DNA]</scope>
    <source>
        <strain>ATCC 10895 / CBS 109.51 / FGSC 9923 / NRRL Y-1056</strain>
    </source>
</reference>
<reference key="2">
    <citation type="journal article" date="2013" name="G3 (Bethesda)">
        <title>Genomes of Ashbya fungi isolated from insects reveal four mating-type loci, numerous translocations, lack of transposons, and distinct gene duplications.</title>
        <authorList>
            <person name="Dietrich F.S."/>
            <person name="Voegeli S."/>
            <person name="Kuo S."/>
            <person name="Philippsen P."/>
        </authorList>
    </citation>
    <scope>GENOME REANNOTATION</scope>
    <source>
        <strain>ATCC 10895 / CBS 109.51 / FGSC 9923 / NRRL Y-1056</strain>
    </source>
</reference>
<proteinExistence type="inferred from homology"/>
<protein>
    <recommendedName>
        <fullName>Protein CFT1</fullName>
    </recommendedName>
    <alternativeName>
        <fullName>Cleavage factor two protein 1</fullName>
    </alternativeName>
</protein>
<sequence>MNVFDEVINATVVNNSVTGHFTTTLREELIITRTNLLSVLHKDNEGRLVLAYEWKLSGRVHGLSLVPHKSGLGRLAVLTGRGRVSIVRFDAENQTLETESLHYYDAKFEELSALTVGAAPRLEQEPAARCLLVHNGDCLAVLPLRGHEEEGEEAEEEEEHPAKRARTDADGRLVGASTVMPASHLHSDIKNVKDMRFLRGLNKSAVGVLYQPQLSWCGNEKLTRQTMKFIILSLDLDDEKSTVINMLQGLPNTLHTIIPLSNGCVLAGVNELLYVDNTGALQGAISLNAFSNSGLNTRIQDNSKLQAFFEQPLCYFATQSNGRDILLLMDEKARMYNVIIEAEGRLLTTFNCVQLPIVNEIFKRNMMPTSICGNMNLETGSLFIGFQSGDAMHVRLNNLKSSLEHKGTVSETLETDEDYMELYGNNAEKEKKNLETESPFDIECLDRLLNIGPVTSLAVGKASSIEHTVAKLANPNKDELSIVATSGNGTGSHLTILENTIVPTVQQALKFISVTQIWNLKIKGKDKYLVTTDSSQTRSDIYSIDRDFKPFKAADFRKNDTTVSTAVTGGGKRIVQVTSKGVHLFDINFKRMMTMNFDFEVVHVCIKDPFLLLTNSKGDIKIYELEPKHKKKFVKTVLPDALKEIIITFGVILESNMCNKYINGLEKSEEPQLLFTFVTADNQIVFFTKDHNDRIFQLNGIDDFRQKLFISTYQLPEDINPDPSIKQVIISRLGHKHKQEYLTILTFGGEVYLYRKCIDNPDRFIKCDHELLITGAPENAYPKGVQGVERVAHYIEDYNGYSVIFITGTVPYIIIKEDNSVPRIFPFANITLVSMTRWGENSVMCVDDVKNARIMTLNLDRDRYYGNKMSLAKIYLEDPLEDFQTLNNITYHERTQTFIVSYAKSIDYVALSEEDEPLVGYNPDKIHAMGFQSGIILLSPKSWEIIDKIEYGKNSLINDMRTMMIQLNSNTKRRREYLVVGNTYVRDEDIGGTGSFYLYDITEVVPEPGKPDTNYKFKDIFQEDIRGTVSTVCEISGRFMISQSSKAMVRDIQEDNSVVPVAFLDMPVFITDAKSFGNLMIIGDSMQGFSFLGFDAEPYRMLTLGKSVSKLETMCVEFLVNNGDVYFLVTDRNNLMHVLKYAPDEPNSLSGQRLVHCTSFNLHSTNTCMRLIKKNDEFGKVSRGFGIYMPSFQCIGSQADGTIFKVVPLSEASYRSLYLIQQQLIDKEVQLCGLNPRMERLENPFYQMGHILRPMLDFTVLKRFATLSIPTRMTMASKAGRQAHAEIWRDLIDIEYSLTSLNKIT</sequence>
<evidence type="ECO:0000250" key="1"/>
<evidence type="ECO:0000256" key="2">
    <source>
        <dbReference type="SAM" id="MobiDB-lite"/>
    </source>
</evidence>
<evidence type="ECO:0000305" key="3"/>
<name>CFT1_EREGS</name>
<organism>
    <name type="scientific">Eremothecium gossypii (strain ATCC 10895 / CBS 109.51 / FGSC 9923 / NRRL Y-1056)</name>
    <name type="common">Yeast</name>
    <name type="synonym">Ashbya gossypii</name>
    <dbReference type="NCBI Taxonomy" id="284811"/>
    <lineage>
        <taxon>Eukaryota</taxon>
        <taxon>Fungi</taxon>
        <taxon>Dikarya</taxon>
        <taxon>Ascomycota</taxon>
        <taxon>Saccharomycotina</taxon>
        <taxon>Saccharomycetes</taxon>
        <taxon>Saccharomycetales</taxon>
        <taxon>Saccharomycetaceae</taxon>
        <taxon>Eremothecium</taxon>
    </lineage>
</organism>
<gene>
    <name type="primary">CFT1</name>
    <name type="ordered locus">AAL060W</name>
</gene>
<feature type="chain" id="PRO_0000290620" description="Protein CFT1">
    <location>
        <begin position="1"/>
        <end position="1305"/>
    </location>
</feature>
<feature type="region of interest" description="Disordered" evidence="2">
    <location>
        <begin position="147"/>
        <end position="166"/>
    </location>
</feature>
<feature type="compositionally biased region" description="Acidic residues" evidence="2">
    <location>
        <begin position="149"/>
        <end position="159"/>
    </location>
</feature>